<evidence type="ECO:0000255" key="1">
    <source>
        <dbReference type="HAMAP-Rule" id="MF_01365"/>
    </source>
</evidence>
<evidence type="ECO:0000305" key="2"/>
<comment type="function">
    <text evidence="1">This protein binds to the 23S rRNA, and is important in its secondary structure. It is located near the subunit interface in the base of the L7/L12 stalk, and near the tRNA binding site of the peptidyltransferase center.</text>
</comment>
<comment type="subunit">
    <text evidence="1">Part of the 50S ribosomal subunit.</text>
</comment>
<comment type="similarity">
    <text evidence="1">Belongs to the universal ribosomal protein uL6 family.</text>
</comment>
<organism>
    <name type="scientific">Nanoarchaeum equitans (strain Kin4-M)</name>
    <dbReference type="NCBI Taxonomy" id="228908"/>
    <lineage>
        <taxon>Archaea</taxon>
        <taxon>Nanobdellota</taxon>
        <taxon>Candidatus Nanoarchaeia</taxon>
        <taxon>Nanoarchaeales</taxon>
        <taxon>Nanoarchaeaceae</taxon>
        <taxon>Nanoarchaeum</taxon>
    </lineage>
</organism>
<protein>
    <recommendedName>
        <fullName evidence="1">Large ribosomal subunit protein uL6</fullName>
    </recommendedName>
    <alternativeName>
        <fullName evidence="2">50S ribosomal protein L6</fullName>
    </alternativeName>
</protein>
<proteinExistence type="inferred from homology"/>
<dbReference type="EMBL" id="AE017199">
    <property type="protein sequence ID" value="AAR39094.1"/>
    <property type="molecule type" value="Genomic_DNA"/>
</dbReference>
<dbReference type="SMR" id="Q74MR6"/>
<dbReference type="STRING" id="228908.NEQ241"/>
<dbReference type="EnsemblBacteria" id="AAR39094">
    <property type="protein sequence ID" value="AAR39094"/>
    <property type="gene ID" value="NEQ241"/>
</dbReference>
<dbReference type="KEGG" id="neq:NEQ241"/>
<dbReference type="PATRIC" id="fig|228908.8.peg.246"/>
<dbReference type="HOGENOM" id="CLU_065464_0_0_2"/>
<dbReference type="Proteomes" id="UP000000578">
    <property type="component" value="Chromosome"/>
</dbReference>
<dbReference type="GO" id="GO:0022625">
    <property type="term" value="C:cytosolic large ribosomal subunit"/>
    <property type="evidence" value="ECO:0007669"/>
    <property type="project" value="TreeGrafter"/>
</dbReference>
<dbReference type="GO" id="GO:0019843">
    <property type="term" value="F:rRNA binding"/>
    <property type="evidence" value="ECO:0007669"/>
    <property type="project" value="UniProtKB-UniRule"/>
</dbReference>
<dbReference type="GO" id="GO:0003735">
    <property type="term" value="F:structural constituent of ribosome"/>
    <property type="evidence" value="ECO:0007669"/>
    <property type="project" value="InterPro"/>
</dbReference>
<dbReference type="GO" id="GO:0002181">
    <property type="term" value="P:cytoplasmic translation"/>
    <property type="evidence" value="ECO:0007669"/>
    <property type="project" value="TreeGrafter"/>
</dbReference>
<dbReference type="FunFam" id="3.90.930.12:FF:000008">
    <property type="entry name" value="50S ribosomal protein L6"/>
    <property type="match status" value="1"/>
</dbReference>
<dbReference type="Gene3D" id="3.90.930.12">
    <property type="entry name" value="Ribosomal protein L6, alpha-beta domain"/>
    <property type="match status" value="2"/>
</dbReference>
<dbReference type="HAMAP" id="MF_01365_A">
    <property type="entry name" value="Ribosomal_uL6_A"/>
    <property type="match status" value="1"/>
</dbReference>
<dbReference type="InterPro" id="IPR000702">
    <property type="entry name" value="Ribosomal_uL6-like"/>
</dbReference>
<dbReference type="InterPro" id="IPR036789">
    <property type="entry name" value="Ribosomal_uL6-like_a/b-dom_sf"/>
</dbReference>
<dbReference type="InterPro" id="IPR020040">
    <property type="entry name" value="Ribosomal_uL6_a/b-dom"/>
</dbReference>
<dbReference type="InterPro" id="IPR019907">
    <property type="entry name" value="Ribosomal_uL6_arc"/>
</dbReference>
<dbReference type="NCBIfam" id="NF004037">
    <property type="entry name" value="PRK05518.1"/>
    <property type="match status" value="1"/>
</dbReference>
<dbReference type="NCBIfam" id="TIGR03653">
    <property type="entry name" value="uL6_arch"/>
    <property type="match status" value="1"/>
</dbReference>
<dbReference type="PANTHER" id="PTHR11655:SF16">
    <property type="entry name" value="60S RIBOSOMAL PROTEIN L9"/>
    <property type="match status" value="1"/>
</dbReference>
<dbReference type="PANTHER" id="PTHR11655">
    <property type="entry name" value="60S/50S RIBOSOMAL PROTEIN L6/L9"/>
    <property type="match status" value="1"/>
</dbReference>
<dbReference type="Pfam" id="PF00347">
    <property type="entry name" value="Ribosomal_L6"/>
    <property type="match status" value="2"/>
</dbReference>
<dbReference type="PIRSF" id="PIRSF002162">
    <property type="entry name" value="Ribosomal_L6"/>
    <property type="match status" value="1"/>
</dbReference>
<dbReference type="SUPFAM" id="SSF56053">
    <property type="entry name" value="Ribosomal protein L6"/>
    <property type="match status" value="2"/>
</dbReference>
<reference key="1">
    <citation type="journal article" date="2003" name="Proc. Natl. Acad. Sci. U.S.A.">
        <title>The genome of Nanoarchaeum equitans: insights into early archaeal evolution and derived parasitism.</title>
        <authorList>
            <person name="Waters E."/>
            <person name="Hohn M.J."/>
            <person name="Ahel I."/>
            <person name="Graham D.E."/>
            <person name="Adams M.D."/>
            <person name="Barnstead M."/>
            <person name="Beeson K.Y."/>
            <person name="Bibbs L."/>
            <person name="Bolanos R."/>
            <person name="Keller M."/>
            <person name="Kretz K."/>
            <person name="Lin X."/>
            <person name="Mathur E."/>
            <person name="Ni J."/>
            <person name="Podar M."/>
            <person name="Richardson T."/>
            <person name="Sutton G.G."/>
            <person name="Simon M."/>
            <person name="Soell D."/>
            <person name="Stetter K.O."/>
            <person name="Short J.M."/>
            <person name="Noorderwier M."/>
        </authorList>
    </citation>
    <scope>NUCLEOTIDE SEQUENCE [LARGE SCALE GENOMIC DNA]</scope>
    <source>
        <strain>Kin4-M</strain>
    </source>
</reference>
<accession>Q74MR6</accession>
<sequence>MRIPIIKYEIPIPENVKVSYENNILKVSGPKGEVERKFYHPLIKLSVNDNKIILETYFATRREKRLINTWRSHIKNMLEGVQNPFVYRLKVCYTHFPMRVKLEGNKLIVENFLGEKAPIIKELPYLDKVKVKIEQNKDETEIVVESPDKEKAGIVASMIEQSTRFLHKRKDRRRFTDGIWLYYKAGKNILEE</sequence>
<gene>
    <name evidence="1" type="primary">rpl6</name>
    <name type="ordered locus">NEQ241</name>
</gene>
<name>RL6_NANEQ</name>
<feature type="chain" id="PRO_0000260992" description="Large ribosomal subunit protein uL6">
    <location>
        <begin position="1"/>
        <end position="192"/>
    </location>
</feature>
<keyword id="KW-1185">Reference proteome</keyword>
<keyword id="KW-0687">Ribonucleoprotein</keyword>
<keyword id="KW-0689">Ribosomal protein</keyword>
<keyword id="KW-0694">RNA-binding</keyword>
<keyword id="KW-0699">rRNA-binding</keyword>